<evidence type="ECO:0000255" key="1">
    <source>
        <dbReference type="PROSITE-ProRule" id="PRU00108"/>
    </source>
</evidence>
<evidence type="ECO:0000256" key="2">
    <source>
        <dbReference type="SAM" id="MobiDB-lite"/>
    </source>
</evidence>
<evidence type="ECO:0000269" key="3">
    <source>
    </source>
</evidence>
<evidence type="ECO:0000269" key="4">
    <source>
    </source>
</evidence>
<evidence type="ECO:0000305" key="5"/>
<comment type="function">
    <text evidence="3 4">Probable transcription factor needed for the proper production of touch cell precursors (PubMed:11333230). Involved in specification of lateral neuroblasts (PubMed:28716930). Essential for embryonic morphogenesis (PubMed:11333230).</text>
</comment>
<comment type="subcellular location">
    <subcellularLocation>
        <location evidence="1 3">Nucleus</location>
    </subcellularLocation>
</comment>
<comment type="tissue specificity">
    <text evidence="3">Expressed in the ectodermal cells of embryos and seam cells and ventral cord motor neurons of young larvae.</text>
</comment>
<comment type="developmental stage">
    <text evidence="3 4">Expressed from the twofold embryo stage through to L4 larval stage (PubMed:11333230). Expressed in the embryonic mother cell of Q and V5 neuroblasts, AB.p(lr)apapaa, and abolished in V5 neuroblasts after division but maintained in Q cells until they divide (PubMed:28716930). Expressed in P-neuroblasts before hatching, maintained while P nuclei migrate into the ventral midline in early L1-stage larvae, and declines after P-neuroblasts divide (PubMed:28716930).</text>
</comment>
<comment type="disruption phenotype">
    <text evidence="3">Worms exhibit the absence of AVM, PVM, and PLM touch cells, defective egg laying, embryonic or larval lethality, cell degeneration, malformation of the posterior body, and uncoordinated movement.</text>
</comment>
<comment type="similarity">
    <text evidence="5">Belongs to the Msh homeobox family.</text>
</comment>
<organism>
    <name type="scientific">Caenorhabditis elegans</name>
    <dbReference type="NCBI Taxonomy" id="6239"/>
    <lineage>
        <taxon>Eukaryota</taxon>
        <taxon>Metazoa</taxon>
        <taxon>Ecdysozoa</taxon>
        <taxon>Nematoda</taxon>
        <taxon>Chromadorea</taxon>
        <taxon>Rhabditida</taxon>
        <taxon>Rhabditina</taxon>
        <taxon>Rhabditomorpha</taxon>
        <taxon>Rhabditoidea</taxon>
        <taxon>Rhabditidae</taxon>
        <taxon>Peloderinae</taxon>
        <taxon>Caenorhabditis</taxon>
    </lineage>
</organism>
<feature type="chain" id="PRO_0000049350" description="Homeobox protein vab-15">
    <location>
        <begin position="1"/>
        <end position="225"/>
    </location>
</feature>
<feature type="DNA-binding region" description="Homeobox" evidence="1">
    <location>
        <begin position="129"/>
        <end position="188"/>
    </location>
</feature>
<feature type="region of interest" description="Disordered" evidence="2">
    <location>
        <begin position="1"/>
        <end position="44"/>
    </location>
</feature>
<feature type="compositionally biased region" description="Basic and acidic residues" evidence="2">
    <location>
        <begin position="23"/>
        <end position="32"/>
    </location>
</feature>
<proteinExistence type="evidence at transcript level"/>
<sequence>MVSKDEKPKQSGLFSVESLLETPKQKCREDLPKPTPITPKTPMLIPGLHPMTPYFGAQLDPVMIYFAQTGNRLPIVSSDSSPESCASSPLSMQHSLQWLSSQREDSPTSDDAKIQIGLSKCMLRKHKNNRKPRTPFSTQQLISLERKFQSKQYLSIAERAEFSASLQLTETQVKIWFQNRRAKSKRLQEAEVEKVKFAQASAYAAAAVGGAPDPSSILAFYQPQW</sequence>
<gene>
    <name type="primary">vab-15</name>
    <name type="ORF">R07B1.1</name>
</gene>
<protein>
    <recommendedName>
        <fullName>Homeobox protein vab-15</fullName>
    </recommendedName>
    <alternativeName>
        <fullName>Variable abnormal morphology protein 15</fullName>
    </alternativeName>
</protein>
<name>VAB15_CAEEL</name>
<keyword id="KW-0217">Developmental protein</keyword>
<keyword id="KW-0238">DNA-binding</keyword>
<keyword id="KW-0371">Homeobox</keyword>
<keyword id="KW-0539">Nucleus</keyword>
<keyword id="KW-1185">Reference proteome</keyword>
<keyword id="KW-0804">Transcription</keyword>
<keyword id="KW-0805">Transcription regulation</keyword>
<accession>Q09604</accession>
<dbReference type="EMBL" id="AF286218">
    <property type="protein sequence ID" value="AAF88063.1"/>
    <property type="molecule type" value="mRNA"/>
</dbReference>
<dbReference type="EMBL" id="Z48621">
    <property type="protein sequence ID" value="CAA88539.1"/>
    <property type="molecule type" value="Genomic_DNA"/>
</dbReference>
<dbReference type="PIR" id="T23992">
    <property type="entry name" value="T23992"/>
</dbReference>
<dbReference type="RefSeq" id="NP_509648.1">
    <property type="nucleotide sequence ID" value="NM_077247.8"/>
</dbReference>
<dbReference type="SMR" id="Q09604"/>
<dbReference type="BioGRID" id="46112">
    <property type="interactions" value="2"/>
</dbReference>
<dbReference type="FunCoup" id="Q09604">
    <property type="interactions" value="153"/>
</dbReference>
<dbReference type="IntAct" id="Q09604">
    <property type="interactions" value="2"/>
</dbReference>
<dbReference type="STRING" id="6239.R07B1.1.1"/>
<dbReference type="PaxDb" id="6239-R07B1.1"/>
<dbReference type="EnsemblMetazoa" id="R07B1.1.1">
    <property type="protein sequence ID" value="R07B1.1.1"/>
    <property type="gene ID" value="WBGene00006881"/>
</dbReference>
<dbReference type="GeneID" id="181197"/>
<dbReference type="KEGG" id="cel:CELE_R07B1.1"/>
<dbReference type="UCSC" id="R07B1.1">
    <property type="organism name" value="c. elegans"/>
</dbReference>
<dbReference type="AGR" id="WB:WBGene00006881"/>
<dbReference type="CTD" id="181197"/>
<dbReference type="WormBase" id="R07B1.1">
    <property type="protein sequence ID" value="CE01626"/>
    <property type="gene ID" value="WBGene00006881"/>
    <property type="gene designation" value="vab-15"/>
</dbReference>
<dbReference type="eggNOG" id="KOG0492">
    <property type="taxonomic scope" value="Eukaryota"/>
</dbReference>
<dbReference type="GeneTree" id="ENSGT00940000169520"/>
<dbReference type="HOGENOM" id="CLU_072675_2_0_1"/>
<dbReference type="InParanoid" id="Q09604"/>
<dbReference type="OMA" id="MIYFAQT"/>
<dbReference type="OrthoDB" id="6159439at2759"/>
<dbReference type="PhylomeDB" id="Q09604"/>
<dbReference type="PRO" id="PR:Q09604"/>
<dbReference type="Proteomes" id="UP000001940">
    <property type="component" value="Chromosome X"/>
</dbReference>
<dbReference type="Bgee" id="WBGene00006881">
    <property type="expression patterns" value="Expressed in embryo and 3 other cell types or tissues"/>
</dbReference>
<dbReference type="GO" id="GO:0005634">
    <property type="term" value="C:nucleus"/>
    <property type="evidence" value="ECO:0000314"/>
    <property type="project" value="UniProtKB"/>
</dbReference>
<dbReference type="GO" id="GO:0003700">
    <property type="term" value="F:DNA-binding transcription factor activity"/>
    <property type="evidence" value="ECO:0000304"/>
    <property type="project" value="UniProtKB"/>
</dbReference>
<dbReference type="GO" id="GO:0000981">
    <property type="term" value="F:DNA-binding transcription factor activity, RNA polymerase II-specific"/>
    <property type="evidence" value="ECO:0000318"/>
    <property type="project" value="GO_Central"/>
</dbReference>
<dbReference type="GO" id="GO:0000977">
    <property type="term" value="F:RNA polymerase II transcription regulatory region sequence-specific DNA binding"/>
    <property type="evidence" value="ECO:0000318"/>
    <property type="project" value="GO_Central"/>
</dbReference>
<dbReference type="GO" id="GO:0043565">
    <property type="term" value="F:sequence-specific DNA binding"/>
    <property type="evidence" value="ECO:0000304"/>
    <property type="project" value="UniProtKB"/>
</dbReference>
<dbReference type="GO" id="GO:0048598">
    <property type="term" value="P:embryonic morphogenesis"/>
    <property type="evidence" value="ECO:0000315"/>
    <property type="project" value="UniProtKB"/>
</dbReference>
<dbReference type="GO" id="GO:0007626">
    <property type="term" value="P:locomotory behavior"/>
    <property type="evidence" value="ECO:0000315"/>
    <property type="project" value="UniProtKB"/>
</dbReference>
<dbReference type="GO" id="GO:0007567">
    <property type="term" value="P:parturition"/>
    <property type="evidence" value="ECO:0000315"/>
    <property type="project" value="UniProtKB"/>
</dbReference>
<dbReference type="GO" id="GO:0006357">
    <property type="term" value="P:regulation of transcription by RNA polymerase II"/>
    <property type="evidence" value="ECO:0000318"/>
    <property type="project" value="GO_Central"/>
</dbReference>
<dbReference type="CDD" id="cd00086">
    <property type="entry name" value="homeodomain"/>
    <property type="match status" value="1"/>
</dbReference>
<dbReference type="FunFam" id="1.10.10.60:FF:000306">
    <property type="entry name" value="Muscle segmentation homeobox"/>
    <property type="match status" value="1"/>
</dbReference>
<dbReference type="Gene3D" id="1.10.10.60">
    <property type="entry name" value="Homeodomain-like"/>
    <property type="match status" value="1"/>
</dbReference>
<dbReference type="InterPro" id="IPR001356">
    <property type="entry name" value="HD"/>
</dbReference>
<dbReference type="InterPro" id="IPR020479">
    <property type="entry name" value="HD_metazoa"/>
</dbReference>
<dbReference type="InterPro" id="IPR017970">
    <property type="entry name" value="Homeobox_CS"/>
</dbReference>
<dbReference type="InterPro" id="IPR009057">
    <property type="entry name" value="Homeodomain-like_sf"/>
</dbReference>
<dbReference type="InterPro" id="IPR050674">
    <property type="entry name" value="Msh_Homeobox_Regulators"/>
</dbReference>
<dbReference type="PANTHER" id="PTHR24338">
    <property type="entry name" value="HOMEOBOX PROTEIN MSX"/>
    <property type="match status" value="1"/>
</dbReference>
<dbReference type="PANTHER" id="PTHR24338:SF0">
    <property type="entry name" value="MUSCLE SEGMENTATION HOMEOBOX"/>
    <property type="match status" value="1"/>
</dbReference>
<dbReference type="Pfam" id="PF00046">
    <property type="entry name" value="Homeodomain"/>
    <property type="match status" value="1"/>
</dbReference>
<dbReference type="PRINTS" id="PR00024">
    <property type="entry name" value="HOMEOBOX"/>
</dbReference>
<dbReference type="SMART" id="SM00389">
    <property type="entry name" value="HOX"/>
    <property type="match status" value="1"/>
</dbReference>
<dbReference type="SUPFAM" id="SSF46689">
    <property type="entry name" value="Homeodomain-like"/>
    <property type="match status" value="1"/>
</dbReference>
<dbReference type="PROSITE" id="PS00027">
    <property type="entry name" value="HOMEOBOX_1"/>
    <property type="match status" value="1"/>
</dbReference>
<dbReference type="PROSITE" id="PS50071">
    <property type="entry name" value="HOMEOBOX_2"/>
    <property type="match status" value="1"/>
</dbReference>
<reference key="1">
    <citation type="journal article" date="2001" name="Genetics">
        <title>Genes regulating touch cell development in Caenorhabditis elegans.</title>
        <authorList>
            <person name="Du H."/>
            <person name="Chalfie M."/>
        </authorList>
    </citation>
    <scope>NUCLEOTIDE SEQUENCE [MRNA]</scope>
    <scope>FUNCTION</scope>
    <scope>SUBCELLULAR LOCATION</scope>
    <scope>TISSUE SPECIFICITY</scope>
    <scope>DEVELOPMENTAL STAGE</scope>
    <scope>DISRUPTION PHENOTYPE</scope>
    <source>
        <strain>Bristol N2</strain>
    </source>
</reference>
<reference key="2">
    <citation type="journal article" date="1998" name="Science">
        <title>Genome sequence of the nematode C. elegans: a platform for investigating biology.</title>
        <authorList>
            <consortium name="The C. elegans sequencing consortium"/>
        </authorList>
    </citation>
    <scope>NUCLEOTIDE SEQUENCE [LARGE SCALE GENOMIC DNA]</scope>
    <source>
        <strain>Bristol N2</strain>
    </source>
</reference>
<reference key="3">
    <citation type="journal article" date="2017" name="Proc. Natl. Acad. Sci. U.S.A.">
        <title>Conserved gene regulatory module specifies lateral neural borders across bilaterians.</title>
        <authorList>
            <person name="Li Y."/>
            <person name="Zhao D."/>
            <person name="Horie T."/>
            <person name="Chen G."/>
            <person name="Bao H."/>
            <person name="Chen S."/>
            <person name="Liu W."/>
            <person name="Horie R."/>
            <person name="Liang T."/>
            <person name="Dong B."/>
            <person name="Feng Q."/>
            <person name="Tao Q."/>
            <person name="Liu X."/>
        </authorList>
    </citation>
    <scope>FUNCTION</scope>
    <scope>DEVELOPMENTAL STAGE</scope>
</reference>